<accession>Q2NFH1</accession>
<keyword id="KW-0378">Hydrolase</keyword>
<keyword id="KW-0546">Nucleotide metabolism</keyword>
<keyword id="KW-0547">Nucleotide-binding</keyword>
<keyword id="KW-1185">Reference proteome</keyword>
<organism>
    <name type="scientific">Methanosphaera stadtmanae (strain ATCC 43021 / DSM 3091 / JCM 11832 / MCB-3)</name>
    <dbReference type="NCBI Taxonomy" id="339860"/>
    <lineage>
        <taxon>Archaea</taxon>
        <taxon>Methanobacteriati</taxon>
        <taxon>Methanobacteriota</taxon>
        <taxon>Methanomada group</taxon>
        <taxon>Methanobacteria</taxon>
        <taxon>Methanobacteriales</taxon>
        <taxon>Methanobacteriaceae</taxon>
        <taxon>Methanosphaera</taxon>
    </lineage>
</organism>
<gene>
    <name evidence="1" type="primary">dcd</name>
    <name type="ordered locus">Msp_1048</name>
</gene>
<comment type="function">
    <text evidence="1">Bifunctional enzyme that catalyzes both the deamination of dCTP to dUTP and the hydrolysis of dUTP to dUMP without releasing the toxic dUTP intermediate.</text>
</comment>
<comment type="catalytic activity">
    <reaction evidence="1">
        <text>dCTP + 2 H2O = dUMP + NH4(+) + diphosphate</text>
        <dbReference type="Rhea" id="RHEA:19205"/>
        <dbReference type="ChEBI" id="CHEBI:15377"/>
        <dbReference type="ChEBI" id="CHEBI:28938"/>
        <dbReference type="ChEBI" id="CHEBI:33019"/>
        <dbReference type="ChEBI" id="CHEBI:61481"/>
        <dbReference type="ChEBI" id="CHEBI:246422"/>
        <dbReference type="EC" id="3.5.4.30"/>
    </reaction>
</comment>
<comment type="pathway">
    <text evidence="1">Pyrimidine metabolism; dUMP biosynthesis; dUMP from dCTP: step 1/1.</text>
</comment>
<comment type="subunit">
    <text evidence="1">Homotrimer.</text>
</comment>
<comment type="similarity">
    <text evidence="1">Belongs to the dCTP deaminase family.</text>
</comment>
<reference key="1">
    <citation type="journal article" date="2006" name="J. Bacteriol.">
        <title>The genome sequence of Methanosphaera stadtmanae reveals why this human intestinal archaeon is restricted to methanol and H2 for methane formation and ATP synthesis.</title>
        <authorList>
            <person name="Fricke W.F."/>
            <person name="Seedorf H."/>
            <person name="Henne A."/>
            <person name="Kruer M."/>
            <person name="Liesegang H."/>
            <person name="Hedderich R."/>
            <person name="Gottschalk G."/>
            <person name="Thauer R.K."/>
        </authorList>
    </citation>
    <scope>NUCLEOTIDE SEQUENCE [LARGE SCALE GENOMIC DNA]</scope>
    <source>
        <strain>ATCC 43021 / DSM 3091 / JCM 11832 / MCB-3</strain>
    </source>
</reference>
<dbReference type="EC" id="3.5.4.30" evidence="1"/>
<dbReference type="EMBL" id="CP000102">
    <property type="protein sequence ID" value="ABC57432.1"/>
    <property type="molecule type" value="Genomic_DNA"/>
</dbReference>
<dbReference type="RefSeq" id="WP_011406631.1">
    <property type="nucleotide sequence ID" value="NC_007681.1"/>
</dbReference>
<dbReference type="SMR" id="Q2NFH1"/>
<dbReference type="STRING" id="339860.Msp_1048"/>
<dbReference type="GeneID" id="41325617"/>
<dbReference type="KEGG" id="mst:Msp_1048"/>
<dbReference type="eggNOG" id="arCOG04048">
    <property type="taxonomic scope" value="Archaea"/>
</dbReference>
<dbReference type="HOGENOM" id="CLU_087476_2_1_2"/>
<dbReference type="OrthoDB" id="33242at2157"/>
<dbReference type="UniPathway" id="UPA00610">
    <property type="reaction ID" value="UER00667"/>
</dbReference>
<dbReference type="Proteomes" id="UP000001931">
    <property type="component" value="Chromosome"/>
</dbReference>
<dbReference type="GO" id="GO:0033973">
    <property type="term" value="F:dCTP deaminase (dUMP-forming) activity"/>
    <property type="evidence" value="ECO:0007669"/>
    <property type="project" value="UniProtKB-UniRule"/>
</dbReference>
<dbReference type="GO" id="GO:0008829">
    <property type="term" value="F:dCTP deaminase activity"/>
    <property type="evidence" value="ECO:0007669"/>
    <property type="project" value="InterPro"/>
</dbReference>
<dbReference type="GO" id="GO:0000166">
    <property type="term" value="F:nucleotide binding"/>
    <property type="evidence" value="ECO:0007669"/>
    <property type="project" value="UniProtKB-KW"/>
</dbReference>
<dbReference type="GO" id="GO:0006226">
    <property type="term" value="P:dUMP biosynthetic process"/>
    <property type="evidence" value="ECO:0007669"/>
    <property type="project" value="UniProtKB-UniRule"/>
</dbReference>
<dbReference type="GO" id="GO:0006229">
    <property type="term" value="P:dUTP biosynthetic process"/>
    <property type="evidence" value="ECO:0007669"/>
    <property type="project" value="InterPro"/>
</dbReference>
<dbReference type="GO" id="GO:0015949">
    <property type="term" value="P:nucleobase-containing small molecule interconversion"/>
    <property type="evidence" value="ECO:0007669"/>
    <property type="project" value="TreeGrafter"/>
</dbReference>
<dbReference type="CDD" id="cd07557">
    <property type="entry name" value="trimeric_dUTPase"/>
    <property type="match status" value="1"/>
</dbReference>
<dbReference type="FunFam" id="2.70.40.10:FF:000005">
    <property type="entry name" value="dCTP deaminase, dUMP-forming"/>
    <property type="match status" value="1"/>
</dbReference>
<dbReference type="Gene3D" id="2.70.40.10">
    <property type="match status" value="1"/>
</dbReference>
<dbReference type="HAMAP" id="MF_00146">
    <property type="entry name" value="dCTP_deaminase"/>
    <property type="match status" value="1"/>
</dbReference>
<dbReference type="InterPro" id="IPR011962">
    <property type="entry name" value="dCTP_deaminase"/>
</dbReference>
<dbReference type="InterPro" id="IPR036157">
    <property type="entry name" value="dUTPase-like_sf"/>
</dbReference>
<dbReference type="InterPro" id="IPR033704">
    <property type="entry name" value="dUTPase_trimeric"/>
</dbReference>
<dbReference type="NCBIfam" id="TIGR02274">
    <property type="entry name" value="dCTP_deam"/>
    <property type="match status" value="1"/>
</dbReference>
<dbReference type="PANTHER" id="PTHR42680">
    <property type="entry name" value="DCTP DEAMINASE"/>
    <property type="match status" value="1"/>
</dbReference>
<dbReference type="PANTHER" id="PTHR42680:SF3">
    <property type="entry name" value="DCTP DEAMINASE"/>
    <property type="match status" value="1"/>
</dbReference>
<dbReference type="Pfam" id="PF22769">
    <property type="entry name" value="DCD"/>
    <property type="match status" value="1"/>
</dbReference>
<dbReference type="SUPFAM" id="SSF51283">
    <property type="entry name" value="dUTPase-like"/>
    <property type="match status" value="1"/>
</dbReference>
<evidence type="ECO:0000255" key="1">
    <source>
        <dbReference type="HAMAP-Rule" id="MF_00146"/>
    </source>
</evidence>
<name>DCDB_METST</name>
<feature type="chain" id="PRO_1000009755" description="dCTP deaminase, dUMP-forming">
    <location>
        <begin position="1"/>
        <end position="197"/>
    </location>
</feature>
<feature type="active site" description="Proton donor/acceptor" evidence="1">
    <location>
        <position position="133"/>
    </location>
</feature>
<feature type="binding site" evidence="1">
    <location>
        <begin position="105"/>
        <end position="110"/>
    </location>
    <ligand>
        <name>dCTP</name>
        <dbReference type="ChEBI" id="CHEBI:61481"/>
    </ligand>
</feature>
<feature type="binding site" evidence="1">
    <location>
        <position position="123"/>
    </location>
    <ligand>
        <name>dCTP</name>
        <dbReference type="ChEBI" id="CHEBI:61481"/>
    </ligand>
</feature>
<feature type="binding site" evidence="1">
    <location>
        <begin position="131"/>
        <end position="133"/>
    </location>
    <ligand>
        <name>dCTP</name>
        <dbReference type="ChEBI" id="CHEBI:61481"/>
    </ligand>
</feature>
<feature type="binding site" evidence="1">
    <location>
        <position position="152"/>
    </location>
    <ligand>
        <name>dCTP</name>
        <dbReference type="ChEBI" id="CHEBI:61481"/>
    </ligand>
</feature>
<feature type="binding site" evidence="1">
    <location>
        <position position="166"/>
    </location>
    <ligand>
        <name>dCTP</name>
        <dbReference type="ChEBI" id="CHEBI:61481"/>
    </ligand>
</feature>
<feature type="binding site" evidence="1">
    <location>
        <position position="174"/>
    </location>
    <ligand>
        <name>dCTP</name>
        <dbReference type="ChEBI" id="CHEBI:61481"/>
    </ligand>
</feature>
<feature type="binding site" evidence="1">
    <location>
        <position position="178"/>
    </location>
    <ligand>
        <name>dCTP</name>
        <dbReference type="ChEBI" id="CHEBI:61481"/>
    </ligand>
</feature>
<feature type="site" description="Important for bifunctional activity" evidence="1">
    <location>
        <begin position="120"/>
        <end position="121"/>
    </location>
</feature>
<protein>
    <recommendedName>
        <fullName evidence="1">dCTP deaminase, dUMP-forming</fullName>
        <ecNumber evidence="1">3.5.4.30</ecNumber>
    </recommendedName>
    <alternativeName>
        <fullName evidence="1">Bifunctional dCTP deaminase:dUTPase</fullName>
    </alternativeName>
    <alternativeName>
        <fullName evidence="1">DCD-DUT</fullName>
    </alternativeName>
</protein>
<proteinExistence type="inferred from homology"/>
<sequence>MAILSDKDIKKYLDEGRIVIDPITNEKQIQPSSVDLRLGDQFKGFKIITKPYIDPFDNTDLESYMSSITVEEDKPFIIHPGEFTLATTYENVKLPDDIVARVEGRSSMGRLGITMHVTAGYIDPGFEGNITLEISNIGKMPVALYPGQRVCQIVFETMTSPSEKPYGHEDRDSKYMGQTGPQVSKIKEDFDIINGGK</sequence>